<dbReference type="EMBL" id="AE016826">
    <property type="protein sequence ID" value="AAO26781.1"/>
    <property type="molecule type" value="Genomic_DNA"/>
</dbReference>
<dbReference type="RefSeq" id="WP_011091182.1">
    <property type="nucleotide sequence ID" value="NC_004545.1"/>
</dbReference>
<dbReference type="SMR" id="Q89B17"/>
<dbReference type="STRING" id="224915.bbp_038"/>
<dbReference type="KEGG" id="bab:bbp_038"/>
<dbReference type="eggNOG" id="COG0081">
    <property type="taxonomic scope" value="Bacteria"/>
</dbReference>
<dbReference type="HOGENOM" id="CLU_062853_0_0_6"/>
<dbReference type="OrthoDB" id="9803740at2"/>
<dbReference type="Proteomes" id="UP000000601">
    <property type="component" value="Chromosome"/>
</dbReference>
<dbReference type="GO" id="GO:0022625">
    <property type="term" value="C:cytosolic large ribosomal subunit"/>
    <property type="evidence" value="ECO:0007669"/>
    <property type="project" value="TreeGrafter"/>
</dbReference>
<dbReference type="GO" id="GO:0019843">
    <property type="term" value="F:rRNA binding"/>
    <property type="evidence" value="ECO:0007669"/>
    <property type="project" value="UniProtKB-UniRule"/>
</dbReference>
<dbReference type="GO" id="GO:0003735">
    <property type="term" value="F:structural constituent of ribosome"/>
    <property type="evidence" value="ECO:0007669"/>
    <property type="project" value="InterPro"/>
</dbReference>
<dbReference type="GO" id="GO:0000049">
    <property type="term" value="F:tRNA binding"/>
    <property type="evidence" value="ECO:0007669"/>
    <property type="project" value="UniProtKB-KW"/>
</dbReference>
<dbReference type="GO" id="GO:0006417">
    <property type="term" value="P:regulation of translation"/>
    <property type="evidence" value="ECO:0007669"/>
    <property type="project" value="UniProtKB-KW"/>
</dbReference>
<dbReference type="GO" id="GO:0006412">
    <property type="term" value="P:translation"/>
    <property type="evidence" value="ECO:0007669"/>
    <property type="project" value="UniProtKB-UniRule"/>
</dbReference>
<dbReference type="CDD" id="cd00403">
    <property type="entry name" value="Ribosomal_L1"/>
    <property type="match status" value="1"/>
</dbReference>
<dbReference type="FunFam" id="3.40.50.790:FF:000001">
    <property type="entry name" value="50S ribosomal protein L1"/>
    <property type="match status" value="1"/>
</dbReference>
<dbReference type="Gene3D" id="3.30.190.20">
    <property type="match status" value="1"/>
</dbReference>
<dbReference type="Gene3D" id="3.40.50.790">
    <property type="match status" value="1"/>
</dbReference>
<dbReference type="HAMAP" id="MF_01318_B">
    <property type="entry name" value="Ribosomal_uL1_B"/>
    <property type="match status" value="1"/>
</dbReference>
<dbReference type="InterPro" id="IPR005878">
    <property type="entry name" value="Ribosom_uL1_bac-type"/>
</dbReference>
<dbReference type="InterPro" id="IPR002143">
    <property type="entry name" value="Ribosomal_uL1"/>
</dbReference>
<dbReference type="InterPro" id="IPR023674">
    <property type="entry name" value="Ribosomal_uL1-like"/>
</dbReference>
<dbReference type="InterPro" id="IPR028364">
    <property type="entry name" value="Ribosomal_uL1/biogenesis"/>
</dbReference>
<dbReference type="InterPro" id="IPR016095">
    <property type="entry name" value="Ribosomal_uL1_3-a/b-sand"/>
</dbReference>
<dbReference type="InterPro" id="IPR023673">
    <property type="entry name" value="Ribosomal_uL1_CS"/>
</dbReference>
<dbReference type="NCBIfam" id="TIGR01169">
    <property type="entry name" value="rplA_bact"/>
    <property type="match status" value="1"/>
</dbReference>
<dbReference type="PANTHER" id="PTHR36427">
    <property type="entry name" value="54S RIBOSOMAL PROTEIN L1, MITOCHONDRIAL"/>
    <property type="match status" value="1"/>
</dbReference>
<dbReference type="PANTHER" id="PTHR36427:SF3">
    <property type="entry name" value="LARGE RIBOSOMAL SUBUNIT PROTEIN UL1M"/>
    <property type="match status" value="1"/>
</dbReference>
<dbReference type="Pfam" id="PF00687">
    <property type="entry name" value="Ribosomal_L1"/>
    <property type="match status" value="1"/>
</dbReference>
<dbReference type="PIRSF" id="PIRSF002155">
    <property type="entry name" value="Ribosomal_L1"/>
    <property type="match status" value="1"/>
</dbReference>
<dbReference type="SUPFAM" id="SSF56808">
    <property type="entry name" value="Ribosomal protein L1"/>
    <property type="match status" value="1"/>
</dbReference>
<dbReference type="PROSITE" id="PS01199">
    <property type="entry name" value="RIBOSOMAL_L1"/>
    <property type="match status" value="1"/>
</dbReference>
<name>RL1_BUCBP</name>
<organism>
    <name type="scientific">Buchnera aphidicola subsp. Baizongia pistaciae (strain Bp)</name>
    <dbReference type="NCBI Taxonomy" id="224915"/>
    <lineage>
        <taxon>Bacteria</taxon>
        <taxon>Pseudomonadati</taxon>
        <taxon>Pseudomonadota</taxon>
        <taxon>Gammaproteobacteria</taxon>
        <taxon>Enterobacterales</taxon>
        <taxon>Erwiniaceae</taxon>
        <taxon>Buchnera</taxon>
    </lineage>
</organism>
<reference key="1">
    <citation type="journal article" date="2003" name="Proc. Natl. Acad. Sci. U.S.A.">
        <title>Reductive genome evolution in Buchnera aphidicola.</title>
        <authorList>
            <person name="van Ham R.C.H.J."/>
            <person name="Kamerbeek J."/>
            <person name="Palacios C."/>
            <person name="Rausell C."/>
            <person name="Abascal F."/>
            <person name="Bastolla U."/>
            <person name="Fernandez J.M."/>
            <person name="Jimenez L."/>
            <person name="Postigo M."/>
            <person name="Silva F.J."/>
            <person name="Tamames J."/>
            <person name="Viguera E."/>
            <person name="Latorre A."/>
            <person name="Valencia A."/>
            <person name="Moran F."/>
            <person name="Moya A."/>
        </authorList>
    </citation>
    <scope>NUCLEOTIDE SEQUENCE [LARGE SCALE GENOMIC DNA]</scope>
    <source>
        <strain>Bp</strain>
    </source>
</reference>
<keyword id="KW-1185">Reference proteome</keyword>
<keyword id="KW-0678">Repressor</keyword>
<keyword id="KW-0687">Ribonucleoprotein</keyword>
<keyword id="KW-0689">Ribosomal protein</keyword>
<keyword id="KW-0694">RNA-binding</keyword>
<keyword id="KW-0699">rRNA-binding</keyword>
<keyword id="KW-0810">Translation regulation</keyword>
<keyword id="KW-0820">tRNA-binding</keyword>
<feature type="chain" id="PRO_0000125632" description="Large ribosomal subunit protein uL1">
    <location>
        <begin position="1"/>
        <end position="233"/>
    </location>
</feature>
<protein>
    <recommendedName>
        <fullName evidence="1">Large ribosomal subunit protein uL1</fullName>
    </recommendedName>
    <alternativeName>
        <fullName evidence="2">50S ribosomal protein L1</fullName>
    </alternativeName>
</protein>
<gene>
    <name evidence="1" type="primary">rplA</name>
    <name type="ordered locus">bbp_038</name>
</gene>
<proteinExistence type="inferred from homology"/>
<evidence type="ECO:0000255" key="1">
    <source>
        <dbReference type="HAMAP-Rule" id="MF_01318"/>
    </source>
</evidence>
<evidence type="ECO:0000305" key="2"/>
<accession>Q89B17</accession>
<comment type="function">
    <text evidence="1">Binds directly to 23S rRNA. The L1 stalk is quite mobile in the ribosome, and is involved in E site tRNA release.</text>
</comment>
<comment type="function">
    <text evidence="1">Protein L1 is also a translational repressor protein, it controls the translation of the L11 operon by binding to its mRNA.</text>
</comment>
<comment type="subunit">
    <text evidence="1">Part of the 50S ribosomal subunit.</text>
</comment>
<comment type="similarity">
    <text evidence="1">Belongs to the universal ribosomal protein uL1 family.</text>
</comment>
<sequence>MKKLTKKQNLFKTFLNHTKKYDIDEGITLLKKMATSKFIESLDVAINLGINPKNTNQNIRNTTILPHGIGRLIKVAVFTQGENEKIAKKFGAEFVGLHNLIETVKTKTILFDVAIATPDVMPYVSQLGPILGPRGLMPNPKLGTITEKLEYAIKNAKSGQIHYKNDKNGIIHISIGKINFENTKIKENLNALISSLKQSKPSQSKGTYIKQVVISTTMSSGIKIDLNTLNNAS</sequence>